<feature type="chain" id="PRO_0000097325" description="Protein RhiA">
    <location>
        <begin position="1"/>
        <end position="231"/>
    </location>
</feature>
<accession>Q03313</accession>
<geneLocation type="plasmid">
    <name>sym pRL1JI</name>
</geneLocation>
<reference key="1">
    <citation type="journal article" date="1992" name="J. Bacteriol.">
        <title>Molecular characterization and regulation of the rhizosphere-expressed genes rhiABCR that can influence nodulation by Rhizobium leguminosarum biovar viciae.</title>
        <authorList>
            <person name="Cubo M.T."/>
            <person name="Economou A."/>
            <person name="Murphy G.J."/>
            <person name="Johnston A.W."/>
            <person name="Downie J.A."/>
        </authorList>
    </citation>
    <scope>NUCLEOTIDE SEQUENCE [GENOMIC DNA]</scope>
    <scope>PROTEIN SEQUENCE OF 1-14</scope>
</reference>
<keyword id="KW-0903">Direct protein sequencing</keyword>
<keyword id="KW-0614">Plasmid</keyword>
<dbReference type="EMBL" id="M98835">
    <property type="protein sequence ID" value="AAA26357.1"/>
    <property type="molecule type" value="Genomic_DNA"/>
</dbReference>
<dbReference type="PIR" id="A41887">
    <property type="entry name" value="A41887"/>
</dbReference>
<dbReference type="RefSeq" id="WP_011654211.1">
    <property type="nucleotide sequence ID" value="NZ_WIFA01000003.1"/>
</dbReference>
<dbReference type="OMA" id="FTWELAY"/>
<organism>
    <name type="scientific">Rhizobium leguminosarum bv. viciae</name>
    <dbReference type="NCBI Taxonomy" id="387"/>
    <lineage>
        <taxon>Bacteria</taxon>
        <taxon>Pseudomonadati</taxon>
        <taxon>Pseudomonadota</taxon>
        <taxon>Alphaproteobacteria</taxon>
        <taxon>Hyphomicrobiales</taxon>
        <taxon>Rhizobiaceae</taxon>
        <taxon>Rhizobium/Agrobacterium group</taxon>
        <taxon>Rhizobium</taxon>
    </lineage>
</organism>
<protein>
    <recommendedName>
        <fullName>Protein RhiA</fullName>
    </recommendedName>
</protein>
<name>RHIA_RHILV</name>
<sequence>MSLHVSYVDKEMTDHARASQPGSAALAQGTQYSLLLKNQSAQPWTFYVYQKMPQPVANVFSLAWFCSPYQIRVGNQIKFTWELAYNFVWSDTGQLIPGVDFFASGVEDCSPSGRNTTTFSLSDGPGLTAPIKGDPAGSLVINDAGNVPNNRFSVGIGMSGTGTYVAQAGTNLLHTFTPTPSYWIAAGTNVTIGSVLSIDTITQTREAKFPSAVFNLVGVLQEDNTWDINPA</sequence>
<gene>
    <name type="primary">rhiA</name>
</gene>
<comment type="function">
    <text>May be involved in plant-microbe interaction.</text>
</comment>
<proteinExistence type="evidence at protein level"/>